<proteinExistence type="inferred from homology"/>
<dbReference type="EMBL" id="AE003852">
    <property type="protein sequence ID" value="AAF93644.1"/>
    <property type="molecule type" value="Genomic_DNA"/>
</dbReference>
<dbReference type="PIR" id="D82319">
    <property type="entry name" value="D82319"/>
</dbReference>
<dbReference type="RefSeq" id="NP_230125.1">
    <property type="nucleotide sequence ID" value="NC_002505.1"/>
</dbReference>
<dbReference type="RefSeq" id="WP_000251279.1">
    <property type="nucleotide sequence ID" value="NZ_LT906614.1"/>
</dbReference>
<dbReference type="SMR" id="Q9KUP4"/>
<dbReference type="STRING" id="243277.VC_0471"/>
<dbReference type="DNASU" id="2615133"/>
<dbReference type="EnsemblBacteria" id="AAF93644">
    <property type="protein sequence ID" value="AAF93644"/>
    <property type="gene ID" value="VC_0471"/>
</dbReference>
<dbReference type="KEGG" id="vch:VC_0471"/>
<dbReference type="PATRIC" id="fig|243277.26.peg.444"/>
<dbReference type="eggNOG" id="COG3091">
    <property type="taxonomic scope" value="Bacteria"/>
</dbReference>
<dbReference type="HOGENOM" id="CLU_113336_0_1_6"/>
<dbReference type="Proteomes" id="UP000000584">
    <property type="component" value="Chromosome 1"/>
</dbReference>
<dbReference type="GO" id="GO:0005737">
    <property type="term" value="C:cytoplasm"/>
    <property type="evidence" value="ECO:0007669"/>
    <property type="project" value="UniProtKB-SubCell"/>
</dbReference>
<dbReference type="GO" id="GO:0008270">
    <property type="term" value="F:zinc ion binding"/>
    <property type="evidence" value="ECO:0007669"/>
    <property type="project" value="UniProtKB-UniRule"/>
</dbReference>
<dbReference type="GO" id="GO:0006950">
    <property type="term" value="P:response to stress"/>
    <property type="evidence" value="ECO:0007669"/>
    <property type="project" value="UniProtKB-ARBA"/>
</dbReference>
<dbReference type="HAMAP" id="MF_00746">
    <property type="entry name" value="SprT"/>
    <property type="match status" value="1"/>
</dbReference>
<dbReference type="InterPro" id="IPR006640">
    <property type="entry name" value="SprT-like_domain"/>
</dbReference>
<dbReference type="InterPro" id="IPR035240">
    <property type="entry name" value="SprT_Zn_ribbon"/>
</dbReference>
<dbReference type="InterPro" id="IPR023483">
    <property type="entry name" value="Uncharacterised_SprT"/>
</dbReference>
<dbReference type="NCBIfam" id="NF003421">
    <property type="entry name" value="PRK04860.1"/>
    <property type="match status" value="1"/>
</dbReference>
<dbReference type="PANTHER" id="PTHR38773">
    <property type="entry name" value="PROTEIN SPRT"/>
    <property type="match status" value="1"/>
</dbReference>
<dbReference type="PANTHER" id="PTHR38773:SF1">
    <property type="entry name" value="PROTEIN SPRT"/>
    <property type="match status" value="1"/>
</dbReference>
<dbReference type="Pfam" id="PF10263">
    <property type="entry name" value="SprT-like"/>
    <property type="match status" value="1"/>
</dbReference>
<dbReference type="Pfam" id="PF17283">
    <property type="entry name" value="Zn_ribbon_SprT"/>
    <property type="match status" value="1"/>
</dbReference>
<dbReference type="SMART" id="SM00731">
    <property type="entry name" value="SprT"/>
    <property type="match status" value="1"/>
</dbReference>
<dbReference type="PROSITE" id="PS00142">
    <property type="entry name" value="ZINC_PROTEASE"/>
    <property type="match status" value="1"/>
</dbReference>
<accession>Q9KUP4</accession>
<evidence type="ECO:0000255" key="1"/>
<evidence type="ECO:0000305" key="2"/>
<sequence length="162" mass="18933">MVRFDLHCQAEQKIKQCIATASEALQRPFKLPKLNYRLRGRAAGKAYLQLGEIRLNPVLFAENVDDFLQQVIPHEIAHLITYQLYGRVRPHGVEWQQVMSQVFKLEPKTTHTFSVTSVQGKTFHYRCACREYPLTIRRHNKVLRGEATYRCQSCQQNLIYQA</sequence>
<name>SPRT_VIBCH</name>
<keyword id="KW-0963">Cytoplasm</keyword>
<keyword id="KW-0479">Metal-binding</keyword>
<keyword id="KW-1185">Reference proteome</keyword>
<keyword id="KW-0862">Zinc</keyword>
<gene>
    <name type="primary">sprT</name>
    <name type="ordered locus">VC_0471</name>
</gene>
<comment type="cofactor">
    <cofactor evidence="2">
        <name>Zn(2+)</name>
        <dbReference type="ChEBI" id="CHEBI:29105"/>
    </cofactor>
    <text evidence="2">Binds 1 zinc ion.</text>
</comment>
<comment type="subcellular location">
    <subcellularLocation>
        <location evidence="2">Cytoplasm</location>
    </subcellularLocation>
</comment>
<comment type="similarity">
    <text evidence="2">Belongs to the SprT family.</text>
</comment>
<protein>
    <recommendedName>
        <fullName>Protein SprT</fullName>
    </recommendedName>
</protein>
<feature type="chain" id="PRO_0000213280" description="Protein SprT">
    <location>
        <begin position="1"/>
        <end position="162"/>
    </location>
</feature>
<feature type="domain" description="SprT-like">
    <location>
        <begin position="18"/>
        <end position="159"/>
    </location>
</feature>
<feature type="active site" evidence="1">
    <location>
        <position position="75"/>
    </location>
</feature>
<feature type="binding site" evidence="1">
    <location>
        <position position="74"/>
    </location>
    <ligand>
        <name>Zn(2+)</name>
        <dbReference type="ChEBI" id="CHEBI:29105"/>
    </ligand>
</feature>
<feature type="binding site" evidence="1">
    <location>
        <position position="78"/>
    </location>
    <ligand>
        <name>Zn(2+)</name>
        <dbReference type="ChEBI" id="CHEBI:29105"/>
    </ligand>
</feature>
<organism>
    <name type="scientific">Vibrio cholerae serotype O1 (strain ATCC 39315 / El Tor Inaba N16961)</name>
    <dbReference type="NCBI Taxonomy" id="243277"/>
    <lineage>
        <taxon>Bacteria</taxon>
        <taxon>Pseudomonadati</taxon>
        <taxon>Pseudomonadota</taxon>
        <taxon>Gammaproteobacteria</taxon>
        <taxon>Vibrionales</taxon>
        <taxon>Vibrionaceae</taxon>
        <taxon>Vibrio</taxon>
    </lineage>
</organism>
<reference key="1">
    <citation type="journal article" date="2000" name="Nature">
        <title>DNA sequence of both chromosomes of the cholera pathogen Vibrio cholerae.</title>
        <authorList>
            <person name="Heidelberg J.F."/>
            <person name="Eisen J.A."/>
            <person name="Nelson W.C."/>
            <person name="Clayton R.A."/>
            <person name="Gwinn M.L."/>
            <person name="Dodson R.J."/>
            <person name="Haft D.H."/>
            <person name="Hickey E.K."/>
            <person name="Peterson J.D."/>
            <person name="Umayam L.A."/>
            <person name="Gill S.R."/>
            <person name="Nelson K.E."/>
            <person name="Read T.D."/>
            <person name="Tettelin H."/>
            <person name="Richardson D.L."/>
            <person name="Ermolaeva M.D."/>
            <person name="Vamathevan J.J."/>
            <person name="Bass S."/>
            <person name="Qin H."/>
            <person name="Dragoi I."/>
            <person name="Sellers P."/>
            <person name="McDonald L.A."/>
            <person name="Utterback T.R."/>
            <person name="Fleischmann R.D."/>
            <person name="Nierman W.C."/>
            <person name="White O."/>
            <person name="Salzberg S.L."/>
            <person name="Smith H.O."/>
            <person name="Colwell R.R."/>
            <person name="Mekalanos J.J."/>
            <person name="Venter J.C."/>
            <person name="Fraser C.M."/>
        </authorList>
    </citation>
    <scope>NUCLEOTIDE SEQUENCE [LARGE SCALE GENOMIC DNA]</scope>
    <source>
        <strain>ATCC 39315 / El Tor Inaba N16961</strain>
    </source>
</reference>